<keyword id="KW-0031">Aminopeptidase</keyword>
<keyword id="KW-0963">Cytoplasm</keyword>
<keyword id="KW-0378">Hydrolase</keyword>
<keyword id="KW-0645">Protease</keyword>
<keyword id="KW-1185">Reference proteome</keyword>
<keyword id="KW-0720">Serine protease</keyword>
<name>PEPX_STRA5</name>
<sequence>MRYNQFSYIPTKPNEAFEELKGLGFPLNKKNSDKANLEAFLRHSFLNQTDTDYALSLLIVDAKTDALTFFKSNSDLTLENLQWIYLQLLGFIPFVDFKDPKAFLQDINFPVSYDNIFQSLHHLLACRGKSGNTLIDQLVADGLLHADNHYHFFNGKSLATFNTNQLIREVVYVETSLDTMSSGEHDLVKVNIIRPTTEHTIPTMMTASPYHQGINDPAADQKTYQMEGALAVKQPKHIQVDTKPFKEEVKHPSKLPISPATESFTHIDSYSLNDYFLSRGFANIYVSGVGTAGSTGFMTSGDYQQIQSFKAVIDWLNGKVTAFTSHKRDKQVKANWSNGLVATTGKSYLGTMSTGLATTGVEGLKVIIAEAAISTWYDYYRENGLVCSPGGYPGEDLDVLTELTYSRNLLAGDYIKNNDCYQALLNEQSKAIDRQSGDYNQYWHDRNYLTHVNNVKSRVVYTHGLQDWNVKPRHVYKVFNALPQTIKKHLFLHQGQHVYMHNWQSIDFRESMNALLSQELLGIDNHFQLEEVIWQDNTTEQTWQVLDAFGGNHQEQIGLGDSKKLIDNHYDKEAFDTYCKDFNVFKNDLFKGNNKTNQITINLPLKKNYLLNGQCKLHLRVKTSDKKAILSAQILDYGPKKRFKDTPTIKFLNSLDNGKNFAREALRELPFTKDHYRVISKGVLNLQNRTDLLTIEAIEPEQWFDIEFSLQPSIYQLSKGDNLRIILYTTDFEHTIRDNASYSITVDLSQSYLTIPTNQGN</sequence>
<organism>
    <name type="scientific">Streptococcus agalactiae serotype V (strain ATCC BAA-611 / 2603 V/R)</name>
    <dbReference type="NCBI Taxonomy" id="208435"/>
    <lineage>
        <taxon>Bacteria</taxon>
        <taxon>Bacillati</taxon>
        <taxon>Bacillota</taxon>
        <taxon>Bacilli</taxon>
        <taxon>Lactobacillales</taxon>
        <taxon>Streptococcaceae</taxon>
        <taxon>Streptococcus</taxon>
    </lineage>
</organism>
<dbReference type="EC" id="3.4.14.11" evidence="1"/>
<dbReference type="EMBL" id="AE009948">
    <property type="protein sequence ID" value="AAN00599.1"/>
    <property type="molecule type" value="Genomic_DNA"/>
</dbReference>
<dbReference type="RefSeq" id="NP_688726.1">
    <property type="nucleotide sequence ID" value="NC_004116.1"/>
</dbReference>
<dbReference type="RefSeq" id="WP_001270172.1">
    <property type="nucleotide sequence ID" value="NC_004116.1"/>
</dbReference>
<dbReference type="SMR" id="Q8DXW0"/>
<dbReference type="STRING" id="208435.SAG1736"/>
<dbReference type="ESTHER" id="strag-pepx">
    <property type="family name" value="Lactobacillus_peptidase"/>
</dbReference>
<dbReference type="KEGG" id="sag:SAG1736"/>
<dbReference type="PATRIC" id="fig|208435.3.peg.1744"/>
<dbReference type="HOGENOM" id="CLU_011800_0_0_9"/>
<dbReference type="OrthoDB" id="319764at2"/>
<dbReference type="Proteomes" id="UP000000821">
    <property type="component" value="Chromosome"/>
</dbReference>
<dbReference type="GO" id="GO:0005737">
    <property type="term" value="C:cytoplasm"/>
    <property type="evidence" value="ECO:0007669"/>
    <property type="project" value="UniProtKB-SubCell"/>
</dbReference>
<dbReference type="GO" id="GO:0004177">
    <property type="term" value="F:aminopeptidase activity"/>
    <property type="evidence" value="ECO:0007669"/>
    <property type="project" value="UniProtKB-KW"/>
</dbReference>
<dbReference type="GO" id="GO:0008239">
    <property type="term" value="F:dipeptidyl-peptidase activity"/>
    <property type="evidence" value="ECO:0007669"/>
    <property type="project" value="UniProtKB-UniRule"/>
</dbReference>
<dbReference type="GO" id="GO:0008236">
    <property type="term" value="F:serine-type peptidase activity"/>
    <property type="evidence" value="ECO:0007669"/>
    <property type="project" value="UniProtKB-KW"/>
</dbReference>
<dbReference type="GO" id="GO:0006508">
    <property type="term" value="P:proteolysis"/>
    <property type="evidence" value="ECO:0007669"/>
    <property type="project" value="UniProtKB-KW"/>
</dbReference>
<dbReference type="Gene3D" id="1.10.246.70">
    <property type="match status" value="1"/>
</dbReference>
<dbReference type="Gene3D" id="3.40.50.1820">
    <property type="entry name" value="alpha/beta hydrolase"/>
    <property type="match status" value="1"/>
</dbReference>
<dbReference type="Gene3D" id="2.60.120.260">
    <property type="entry name" value="Galactose-binding domain-like"/>
    <property type="match status" value="1"/>
</dbReference>
<dbReference type="HAMAP" id="MF_00698">
    <property type="entry name" value="Aminopeptidase_S15"/>
    <property type="match status" value="1"/>
</dbReference>
<dbReference type="InterPro" id="IPR029058">
    <property type="entry name" value="AB_hydrolase_fold"/>
</dbReference>
<dbReference type="InterPro" id="IPR008979">
    <property type="entry name" value="Galactose-bd-like_sf"/>
</dbReference>
<dbReference type="InterPro" id="IPR008252">
    <property type="entry name" value="Pept_S15_Xpro"/>
</dbReference>
<dbReference type="InterPro" id="IPR015251">
    <property type="entry name" value="PepX_N_dom"/>
</dbReference>
<dbReference type="InterPro" id="IPR036313">
    <property type="entry name" value="PepX_N_dom_sf"/>
</dbReference>
<dbReference type="InterPro" id="IPR000383">
    <property type="entry name" value="Xaa-Pro-like_dom"/>
</dbReference>
<dbReference type="InterPro" id="IPR013736">
    <property type="entry name" value="Xaa-Pro_dipept_C"/>
</dbReference>
<dbReference type="InterPro" id="IPR050585">
    <property type="entry name" value="Xaa-Pro_dipeptidyl-ppase/CocE"/>
</dbReference>
<dbReference type="NCBIfam" id="NF003783">
    <property type="entry name" value="PRK05371.1-4"/>
    <property type="match status" value="1"/>
</dbReference>
<dbReference type="PANTHER" id="PTHR43056:SF10">
    <property type="entry name" value="COCE_NOND FAMILY, PUTATIVE (AFU_ORTHOLOGUE AFUA_7G00600)-RELATED"/>
    <property type="match status" value="1"/>
</dbReference>
<dbReference type="PANTHER" id="PTHR43056">
    <property type="entry name" value="PEPTIDASE S9 PROLYL OLIGOPEPTIDASE"/>
    <property type="match status" value="1"/>
</dbReference>
<dbReference type="Pfam" id="PF02129">
    <property type="entry name" value="Peptidase_S15"/>
    <property type="match status" value="1"/>
</dbReference>
<dbReference type="Pfam" id="PF08530">
    <property type="entry name" value="PepX_C"/>
    <property type="match status" value="1"/>
</dbReference>
<dbReference type="Pfam" id="PF09168">
    <property type="entry name" value="PepX_N"/>
    <property type="match status" value="1"/>
</dbReference>
<dbReference type="PRINTS" id="PR00923">
    <property type="entry name" value="LACTOPTASE"/>
</dbReference>
<dbReference type="SMART" id="SM00939">
    <property type="entry name" value="PepX_C"/>
    <property type="match status" value="1"/>
</dbReference>
<dbReference type="SMART" id="SM00940">
    <property type="entry name" value="PepX_N"/>
    <property type="match status" value="1"/>
</dbReference>
<dbReference type="SUPFAM" id="SSF53474">
    <property type="entry name" value="alpha/beta-Hydrolases"/>
    <property type="match status" value="1"/>
</dbReference>
<dbReference type="SUPFAM" id="SSF49785">
    <property type="entry name" value="Galactose-binding domain-like"/>
    <property type="match status" value="1"/>
</dbReference>
<dbReference type="SUPFAM" id="SSF81761">
    <property type="entry name" value="X-Prolyl dipeptidyl aminopeptidase PepX, N-terminal domain"/>
    <property type="match status" value="1"/>
</dbReference>
<comment type="function">
    <text evidence="1">Removes N-terminal dipeptides sequentially from polypeptides having unsubstituted N-termini provided that the penultimate residue is proline.</text>
</comment>
<comment type="catalytic activity">
    <reaction evidence="1">
        <text>Hydrolyzes Xaa-Pro-|- bonds to release unblocked, N-terminal dipeptides from substrates including Ala-Pro-|-p-nitroanilide and (sequentially) Tyr-Pro-|-Phe-Pro-|-Gly-Pro-|-Ile.</text>
        <dbReference type="EC" id="3.4.14.11"/>
    </reaction>
</comment>
<comment type="subunit">
    <text evidence="1">Homodimer.</text>
</comment>
<comment type="subcellular location">
    <subcellularLocation>
        <location evidence="1">Cytoplasm</location>
    </subcellularLocation>
</comment>
<comment type="similarity">
    <text evidence="1">Belongs to the peptidase S15 family.</text>
</comment>
<gene>
    <name evidence="1" type="primary">pepX</name>
    <name type="ordered locus">SAG1736</name>
</gene>
<reference key="1">
    <citation type="journal article" date="2002" name="Proc. Natl. Acad. Sci. U.S.A.">
        <title>Complete genome sequence and comparative genomic analysis of an emerging human pathogen, serotype V Streptococcus agalactiae.</title>
        <authorList>
            <person name="Tettelin H."/>
            <person name="Masignani V."/>
            <person name="Cieslewicz M.J."/>
            <person name="Eisen J.A."/>
            <person name="Peterson S.N."/>
            <person name="Wessels M.R."/>
            <person name="Paulsen I.T."/>
            <person name="Nelson K.E."/>
            <person name="Margarit I."/>
            <person name="Read T.D."/>
            <person name="Madoff L.C."/>
            <person name="Wolf A.M."/>
            <person name="Beanan M.J."/>
            <person name="Brinkac L.M."/>
            <person name="Daugherty S.C."/>
            <person name="DeBoy R.T."/>
            <person name="Durkin A.S."/>
            <person name="Kolonay J.F."/>
            <person name="Madupu R."/>
            <person name="Lewis M.R."/>
            <person name="Radune D."/>
            <person name="Fedorova N.B."/>
            <person name="Scanlan D."/>
            <person name="Khouri H.M."/>
            <person name="Mulligan S."/>
            <person name="Carty H.A."/>
            <person name="Cline R.T."/>
            <person name="Van Aken S.E."/>
            <person name="Gill J."/>
            <person name="Scarselli M."/>
            <person name="Mora M."/>
            <person name="Iacobini E.T."/>
            <person name="Brettoni C."/>
            <person name="Galli G."/>
            <person name="Mariani M."/>
            <person name="Vegni F."/>
            <person name="Maione D."/>
            <person name="Rinaudo D."/>
            <person name="Rappuoli R."/>
            <person name="Telford J.L."/>
            <person name="Kasper D.L."/>
            <person name="Grandi G."/>
            <person name="Fraser C.M."/>
        </authorList>
    </citation>
    <scope>NUCLEOTIDE SEQUENCE [LARGE SCALE GENOMIC DNA]</scope>
    <source>
        <strain>ATCC BAA-611 / 2603 V/R</strain>
    </source>
</reference>
<feature type="chain" id="PRO_0000220225" description="Xaa-Pro dipeptidyl-peptidase">
    <location>
        <begin position="1"/>
        <end position="761"/>
    </location>
</feature>
<feature type="active site" description="Charge relay system" evidence="1">
    <location>
        <position position="347"/>
    </location>
</feature>
<feature type="active site" description="Charge relay system" evidence="1">
    <location>
        <position position="467"/>
    </location>
</feature>
<feature type="active site" description="Charge relay system" evidence="1">
    <location>
        <position position="497"/>
    </location>
</feature>
<protein>
    <recommendedName>
        <fullName evidence="1">Xaa-Pro dipeptidyl-peptidase</fullName>
        <ecNumber evidence="1">3.4.14.11</ecNumber>
    </recommendedName>
    <alternativeName>
        <fullName evidence="1">X-Pro dipeptidyl-peptidase</fullName>
    </alternativeName>
    <alternativeName>
        <fullName evidence="1">X-prolyl-dipeptidyl aminopeptidase</fullName>
        <shortName evidence="1">X-PDAP</shortName>
    </alternativeName>
</protein>
<accession>Q8DXW0</accession>
<evidence type="ECO:0000255" key="1">
    <source>
        <dbReference type="HAMAP-Rule" id="MF_00698"/>
    </source>
</evidence>
<proteinExistence type="inferred from homology"/>